<accession>Q8ZQY4</accession>
<proteinExistence type="inferred from homology"/>
<feature type="chain" id="PRO_0000206820" description="Pyrimidine-specific ribonucleoside hydrolase RihA">
    <location>
        <begin position="1"/>
        <end position="311"/>
    </location>
</feature>
<feature type="active site" evidence="1">
    <location>
        <position position="240"/>
    </location>
</feature>
<protein>
    <recommendedName>
        <fullName evidence="1">Pyrimidine-specific ribonucleoside hydrolase RihA</fullName>
        <ecNumber evidence="1">3.2.-.-</ecNumber>
    </recommendedName>
    <alternativeName>
        <fullName evidence="1">Cytidine/uridine-specific hydrolase</fullName>
    </alternativeName>
</protein>
<sequence>MALPIIIDCDPGHDDAIALVLALASPELEVKAITSSAGNQTPEKTLRNVLRMLTLLKRLDIPVAGGAVKPLMRELIIADNVHGESGLDGPALPEPSFAPQSGTAVELMAKTLRESAQPVTIVSTGPQTNVALLLNSHPELHTKIARIVIMGGAMALGNWTPAAEFNIYVDPEAAEIVFQSGIPVVMAGLDVTHKAQIHAADIERFRAIGNPISTIVAELLDFFMEYHKDEKWGFVGAPLHDPCTIAWLLKPEIFTTVERWVGVETQGKYTQGMTVVDYYFLTGNKPNATVMVDVDRQGFVDLLAERLQYYA</sequence>
<comment type="function">
    <text evidence="1">Hydrolyzes cytidine or uridine to ribose and cytosine or uracil, respectively.</text>
</comment>
<comment type="similarity">
    <text evidence="1">Belongs to the IUNH family. RihA subfamily.</text>
</comment>
<organism>
    <name type="scientific">Salmonella typhimurium (strain LT2 / SGSC1412 / ATCC 700720)</name>
    <dbReference type="NCBI Taxonomy" id="99287"/>
    <lineage>
        <taxon>Bacteria</taxon>
        <taxon>Pseudomonadati</taxon>
        <taxon>Pseudomonadota</taxon>
        <taxon>Gammaproteobacteria</taxon>
        <taxon>Enterobacterales</taxon>
        <taxon>Enterobacteriaceae</taxon>
        <taxon>Salmonella</taxon>
    </lineage>
</organism>
<reference key="1">
    <citation type="journal article" date="2001" name="Nature">
        <title>Complete genome sequence of Salmonella enterica serovar Typhimurium LT2.</title>
        <authorList>
            <person name="McClelland M."/>
            <person name="Sanderson K.E."/>
            <person name="Spieth J."/>
            <person name="Clifton S.W."/>
            <person name="Latreille P."/>
            <person name="Courtney L."/>
            <person name="Porwollik S."/>
            <person name="Ali J."/>
            <person name="Dante M."/>
            <person name="Du F."/>
            <person name="Hou S."/>
            <person name="Layman D."/>
            <person name="Leonard S."/>
            <person name="Nguyen C."/>
            <person name="Scott K."/>
            <person name="Holmes A."/>
            <person name="Grewal N."/>
            <person name="Mulvaney E."/>
            <person name="Ryan E."/>
            <person name="Sun H."/>
            <person name="Florea L."/>
            <person name="Miller W."/>
            <person name="Stoneking T."/>
            <person name="Nhan M."/>
            <person name="Waterston R."/>
            <person name="Wilson R.K."/>
        </authorList>
    </citation>
    <scope>NUCLEOTIDE SEQUENCE [LARGE SCALE GENOMIC DNA]</scope>
    <source>
        <strain>LT2 / SGSC1412 / ATCC 700720</strain>
    </source>
</reference>
<keyword id="KW-0326">Glycosidase</keyword>
<keyword id="KW-0378">Hydrolase</keyword>
<keyword id="KW-1185">Reference proteome</keyword>
<dbReference type="EC" id="3.2.-.-" evidence="1"/>
<dbReference type="EMBL" id="AE006468">
    <property type="protein sequence ID" value="AAL19612.1"/>
    <property type="molecule type" value="Genomic_DNA"/>
</dbReference>
<dbReference type="RefSeq" id="WP_001207419.1">
    <property type="nucleotide sequence ID" value="NC_003197.2"/>
</dbReference>
<dbReference type="SMR" id="Q8ZQY4"/>
<dbReference type="STRING" id="99287.STM0661"/>
<dbReference type="PaxDb" id="99287-STM0661"/>
<dbReference type="KEGG" id="stm:STM0661"/>
<dbReference type="PATRIC" id="fig|99287.12.peg.697"/>
<dbReference type="HOGENOM" id="CLU_036838_2_0_6"/>
<dbReference type="OMA" id="WVGVETK"/>
<dbReference type="PhylomeDB" id="Q8ZQY4"/>
<dbReference type="BioCyc" id="SENT99287:STM0661-MONOMER"/>
<dbReference type="Proteomes" id="UP000001014">
    <property type="component" value="Chromosome"/>
</dbReference>
<dbReference type="GO" id="GO:0005829">
    <property type="term" value="C:cytosol"/>
    <property type="evidence" value="ECO:0000318"/>
    <property type="project" value="GO_Central"/>
</dbReference>
<dbReference type="GO" id="GO:0008477">
    <property type="term" value="F:purine nucleosidase activity"/>
    <property type="evidence" value="ECO:0000318"/>
    <property type="project" value="GO_Central"/>
</dbReference>
<dbReference type="GO" id="GO:0045437">
    <property type="term" value="F:uridine nucleosidase activity"/>
    <property type="evidence" value="ECO:0007669"/>
    <property type="project" value="InterPro"/>
</dbReference>
<dbReference type="GO" id="GO:0015949">
    <property type="term" value="P:nucleobase-containing small molecule interconversion"/>
    <property type="evidence" value="ECO:0007669"/>
    <property type="project" value="InterPro"/>
</dbReference>
<dbReference type="GO" id="GO:0006152">
    <property type="term" value="P:purine nucleoside catabolic process"/>
    <property type="evidence" value="ECO:0000318"/>
    <property type="project" value="GO_Central"/>
</dbReference>
<dbReference type="GO" id="GO:0006206">
    <property type="term" value="P:pyrimidine nucleobase metabolic process"/>
    <property type="evidence" value="ECO:0007669"/>
    <property type="project" value="UniProtKB-UniRule"/>
</dbReference>
<dbReference type="CDD" id="cd02651">
    <property type="entry name" value="nuc_hydro_IU_UC_XIUA"/>
    <property type="match status" value="1"/>
</dbReference>
<dbReference type="FunFam" id="3.90.245.10:FF:000001">
    <property type="entry name" value="Pyrimidine-specific ribonucleoside hydrolase RihA"/>
    <property type="match status" value="1"/>
</dbReference>
<dbReference type="Gene3D" id="3.90.245.10">
    <property type="entry name" value="Ribonucleoside hydrolase-like"/>
    <property type="match status" value="1"/>
</dbReference>
<dbReference type="HAMAP" id="MF_01431">
    <property type="entry name" value="Pyrim_hydro_RihA"/>
    <property type="match status" value="1"/>
</dbReference>
<dbReference type="InterPro" id="IPR015910">
    <property type="entry name" value="I/U_nuclsd_hydro_CS"/>
</dbReference>
<dbReference type="InterPro" id="IPR001910">
    <property type="entry name" value="Inosine/uridine_hydrolase_dom"/>
</dbReference>
<dbReference type="InterPro" id="IPR023186">
    <property type="entry name" value="IUNH"/>
</dbReference>
<dbReference type="InterPro" id="IPR022975">
    <property type="entry name" value="Pyrim_hydro_RihA"/>
</dbReference>
<dbReference type="InterPro" id="IPR036452">
    <property type="entry name" value="Ribo_hydro-like"/>
</dbReference>
<dbReference type="NCBIfam" id="NF007761">
    <property type="entry name" value="PRK10443.1"/>
    <property type="match status" value="1"/>
</dbReference>
<dbReference type="PANTHER" id="PTHR12304">
    <property type="entry name" value="INOSINE-URIDINE PREFERRING NUCLEOSIDE HYDROLASE"/>
    <property type="match status" value="1"/>
</dbReference>
<dbReference type="PANTHER" id="PTHR12304:SF4">
    <property type="entry name" value="URIDINE NUCLEOSIDASE"/>
    <property type="match status" value="1"/>
</dbReference>
<dbReference type="Pfam" id="PF01156">
    <property type="entry name" value="IU_nuc_hydro"/>
    <property type="match status" value="1"/>
</dbReference>
<dbReference type="SUPFAM" id="SSF53590">
    <property type="entry name" value="Nucleoside hydrolase"/>
    <property type="match status" value="1"/>
</dbReference>
<dbReference type="PROSITE" id="PS01247">
    <property type="entry name" value="IUNH"/>
    <property type="match status" value="1"/>
</dbReference>
<gene>
    <name evidence="1" type="primary">rihA</name>
    <name type="ordered locus">STM0661</name>
</gene>
<name>RIHA_SALTY</name>
<evidence type="ECO:0000255" key="1">
    <source>
        <dbReference type="HAMAP-Rule" id="MF_01431"/>
    </source>
</evidence>